<dbReference type="EMBL" id="Y09710">
    <property type="protein sequence ID" value="CAA70881.1"/>
    <property type="molecule type" value="Genomic_DNA"/>
</dbReference>
<dbReference type="SMR" id="P84327"/>
<dbReference type="eggNOG" id="KOG0878">
    <property type="taxonomic scope" value="Eukaryota"/>
</dbReference>
<dbReference type="OrthoDB" id="268693at2759"/>
<dbReference type="ChiTaRS" id="RpL32">
    <property type="organism name" value="fly"/>
</dbReference>
<dbReference type="GO" id="GO:0022625">
    <property type="term" value="C:cytosolic large ribosomal subunit"/>
    <property type="evidence" value="ECO:0007669"/>
    <property type="project" value="TreeGrafter"/>
</dbReference>
<dbReference type="GO" id="GO:0003735">
    <property type="term" value="F:structural constituent of ribosome"/>
    <property type="evidence" value="ECO:0007669"/>
    <property type="project" value="InterPro"/>
</dbReference>
<dbReference type="GO" id="GO:0006412">
    <property type="term" value="P:translation"/>
    <property type="evidence" value="ECO:0007669"/>
    <property type="project" value="InterPro"/>
</dbReference>
<dbReference type="CDD" id="cd00513">
    <property type="entry name" value="Ribosomal_L32_L32e"/>
    <property type="match status" value="1"/>
</dbReference>
<dbReference type="InterPro" id="IPR001515">
    <property type="entry name" value="Ribosomal_eL32"/>
</dbReference>
<dbReference type="InterPro" id="IPR018263">
    <property type="entry name" value="Ribosomal_eL32_CS"/>
</dbReference>
<dbReference type="InterPro" id="IPR036351">
    <property type="entry name" value="Ribosomal_eL32_sf"/>
</dbReference>
<dbReference type="PANTHER" id="PTHR23413">
    <property type="entry name" value="60S RIBOSOMAL PROTEIN L32 AND DNA-DIRECTED RNA POLYMERASE II, SUBUNIT N"/>
    <property type="match status" value="1"/>
</dbReference>
<dbReference type="PANTHER" id="PTHR23413:SF1">
    <property type="entry name" value="RIBOSOMAL PROTEIN L32"/>
    <property type="match status" value="1"/>
</dbReference>
<dbReference type="Pfam" id="PF01655">
    <property type="entry name" value="Ribosomal_L32e"/>
    <property type="match status" value="1"/>
</dbReference>
<dbReference type="SMART" id="SM01393">
    <property type="entry name" value="Ribosomal_L32e"/>
    <property type="match status" value="1"/>
</dbReference>
<dbReference type="SUPFAM" id="SSF52042">
    <property type="entry name" value="Ribosomal protein L32e"/>
    <property type="match status" value="1"/>
</dbReference>
<dbReference type="PROSITE" id="PS00580">
    <property type="entry name" value="RIBOSOMAL_L32E"/>
    <property type="match status" value="1"/>
</dbReference>
<protein>
    <recommendedName>
        <fullName evidence="1">Large ribosomal subunit protein eL32</fullName>
    </recommendedName>
    <alternativeName>
        <fullName>60S ribosomal protein L32</fullName>
    </alternativeName>
    <alternativeName>
        <fullName>Ribosomal protein 49</fullName>
    </alternativeName>
</protein>
<keyword id="KW-0687">Ribonucleoprotein</keyword>
<keyword id="KW-0689">Ribosomal protein</keyword>
<feature type="chain" id="PRO_0000131130" description="Large ribosomal subunit protein eL32">
    <location>
        <begin position="1"/>
        <end position="134"/>
    </location>
</feature>
<proteinExistence type="inferred from homology"/>
<organism>
    <name type="scientific">Drosophila persimilis</name>
    <name type="common">Fruit fly</name>
    <dbReference type="NCBI Taxonomy" id="7234"/>
    <lineage>
        <taxon>Eukaryota</taxon>
        <taxon>Metazoa</taxon>
        <taxon>Ecdysozoa</taxon>
        <taxon>Arthropoda</taxon>
        <taxon>Hexapoda</taxon>
        <taxon>Insecta</taxon>
        <taxon>Pterygota</taxon>
        <taxon>Neoptera</taxon>
        <taxon>Endopterygota</taxon>
        <taxon>Diptera</taxon>
        <taxon>Brachycera</taxon>
        <taxon>Muscomorpha</taxon>
        <taxon>Ephydroidea</taxon>
        <taxon>Drosophilidae</taxon>
        <taxon>Drosophila</taxon>
        <taxon>Sophophora</taxon>
    </lineage>
</organism>
<name>RL32_DROPE</name>
<reference key="1">
    <citation type="journal article" date="1998" name="Mol. Phylogenet. Evol.">
        <title>Molecular and chromosomal phylogeny in the obscura group of Drosophila inferred from sequences of the rp49 gene region.</title>
        <authorList>
            <person name="Ramos-Onsins S."/>
            <person name="Segarra C."/>
            <person name="Rozas J."/>
            <person name="Aguade M."/>
        </authorList>
    </citation>
    <scope>NUCLEOTIDE SEQUENCE [GENOMIC DNA]</scope>
</reference>
<evidence type="ECO:0000305" key="1"/>
<gene>
    <name type="primary">RpL32</name>
    <name type="synonym">rp49</name>
</gene>
<accession>P84327</accession>
<accession>P46615</accession>
<sequence length="134" mass="16062">MTIRPAYRPKIIKKRTKHFIRHQSDRYAKLSHKWRKPKGIDNRVRRRFKGQYLMPNIGYGSNKRTRHMLPTGFKKFLVHNVRELEVLLMQNRVYCGEIAHAVSSKKRKEIVERAKQLSIRLTNPNGRLRSQENE</sequence>
<comment type="similarity">
    <text evidence="1">Belongs to the eukaryotic ribosomal protein eL32 family.</text>
</comment>